<comment type="function">
    <text evidence="1">Catalyzes the transfer of 4-deoxy-4-formamido-L-arabinose from UDP to undecaprenyl phosphate. The modified arabinose is attached to lipid A and is required for resistance to polymyxin and cationic antimicrobial peptides.</text>
</comment>
<comment type="catalytic activity">
    <reaction evidence="1">
        <text>UDP-4-deoxy-4-formamido-beta-L-arabinose + di-trans,octa-cis-undecaprenyl phosphate = 4-deoxy-4-formamido-alpha-L-arabinopyranosyl di-trans,octa-cis-undecaprenyl phosphate + UDP</text>
        <dbReference type="Rhea" id="RHEA:27722"/>
        <dbReference type="ChEBI" id="CHEBI:58223"/>
        <dbReference type="ChEBI" id="CHEBI:58709"/>
        <dbReference type="ChEBI" id="CHEBI:58909"/>
        <dbReference type="ChEBI" id="CHEBI:60392"/>
        <dbReference type="EC" id="2.4.2.53"/>
    </reaction>
</comment>
<comment type="pathway">
    <text evidence="1">Glycolipid biosynthesis; 4-amino-4-deoxy-alpha-L-arabinose undecaprenyl phosphate biosynthesis; 4-amino-4-deoxy-alpha-L-arabinose undecaprenyl phosphate from UDP-4-deoxy-4-formamido-beta-L-arabinose and undecaprenyl phosphate: step 1/2.</text>
</comment>
<comment type="pathway">
    <text evidence="1">Bacterial outer membrane biogenesis; lipopolysaccharide biosynthesis.</text>
</comment>
<comment type="subcellular location">
    <subcellularLocation>
        <location evidence="1">Cell inner membrane</location>
        <topology evidence="1">Multi-pass membrane protein</topology>
    </subcellularLocation>
</comment>
<comment type="similarity">
    <text evidence="1">Belongs to the glycosyltransferase 2 family.</text>
</comment>
<protein>
    <recommendedName>
        <fullName evidence="1">Undecaprenyl-phosphate 4-deoxy-4-formamido-L-arabinose transferase</fullName>
        <ecNumber evidence="1">2.4.2.53</ecNumber>
    </recommendedName>
    <alternativeName>
        <fullName evidence="1">Undecaprenyl-phosphate Ara4FN transferase</fullName>
        <shortName evidence="1">Ara4FN transferase</shortName>
    </alternativeName>
</protein>
<keyword id="KW-0046">Antibiotic resistance</keyword>
<keyword id="KW-0997">Cell inner membrane</keyword>
<keyword id="KW-1003">Cell membrane</keyword>
<keyword id="KW-0328">Glycosyltransferase</keyword>
<keyword id="KW-0441">Lipid A biosynthesis</keyword>
<keyword id="KW-0444">Lipid biosynthesis</keyword>
<keyword id="KW-0443">Lipid metabolism</keyword>
<keyword id="KW-0448">Lipopolysaccharide biosynthesis</keyword>
<keyword id="KW-0472">Membrane</keyword>
<keyword id="KW-0808">Transferase</keyword>
<keyword id="KW-0812">Transmembrane</keyword>
<keyword id="KW-1133">Transmembrane helix</keyword>
<dbReference type="EC" id="2.4.2.53" evidence="1"/>
<dbReference type="EMBL" id="CU928164">
    <property type="protein sequence ID" value="CAR18527.1"/>
    <property type="molecule type" value="Genomic_DNA"/>
</dbReference>
<dbReference type="RefSeq" id="WP_000461640.1">
    <property type="nucleotide sequence ID" value="NC_011750.1"/>
</dbReference>
<dbReference type="RefSeq" id="YP_002408357.1">
    <property type="nucleotide sequence ID" value="NC_011750.1"/>
</dbReference>
<dbReference type="SMR" id="B7NNT3"/>
<dbReference type="STRING" id="585057.ECIAI39_2401"/>
<dbReference type="CAZy" id="GT2">
    <property type="family name" value="Glycosyltransferase Family 2"/>
</dbReference>
<dbReference type="KEGG" id="ect:ECIAI39_2401"/>
<dbReference type="PATRIC" id="fig|585057.6.peg.2503"/>
<dbReference type="HOGENOM" id="CLU_033536_0_0_6"/>
<dbReference type="UniPathway" id="UPA00030"/>
<dbReference type="UniPathway" id="UPA00036">
    <property type="reaction ID" value="UER00495"/>
</dbReference>
<dbReference type="Proteomes" id="UP000000749">
    <property type="component" value="Chromosome"/>
</dbReference>
<dbReference type="GO" id="GO:0005886">
    <property type="term" value="C:plasma membrane"/>
    <property type="evidence" value="ECO:0007669"/>
    <property type="project" value="UniProtKB-SubCell"/>
</dbReference>
<dbReference type="GO" id="GO:0016780">
    <property type="term" value="F:phosphotransferase activity, for other substituted phosphate groups"/>
    <property type="evidence" value="ECO:0007669"/>
    <property type="project" value="UniProtKB-UniRule"/>
</dbReference>
<dbReference type="GO" id="GO:0099621">
    <property type="term" value="F:undecaprenyl-phosphate 4-deoxy-4-formamido-L-arabinose transferase activity"/>
    <property type="evidence" value="ECO:0007669"/>
    <property type="project" value="UniProtKB-EC"/>
</dbReference>
<dbReference type="GO" id="GO:0036108">
    <property type="term" value="P:4-amino-4-deoxy-alpha-L-arabinopyranosyl undecaprenyl phosphate biosynthetic process"/>
    <property type="evidence" value="ECO:0007669"/>
    <property type="project" value="UniProtKB-UniRule"/>
</dbReference>
<dbReference type="GO" id="GO:0009245">
    <property type="term" value="P:lipid A biosynthetic process"/>
    <property type="evidence" value="ECO:0007669"/>
    <property type="project" value="UniProtKB-UniRule"/>
</dbReference>
<dbReference type="GO" id="GO:0009103">
    <property type="term" value="P:lipopolysaccharide biosynthetic process"/>
    <property type="evidence" value="ECO:0007669"/>
    <property type="project" value="UniProtKB-UniRule"/>
</dbReference>
<dbReference type="GO" id="GO:0046677">
    <property type="term" value="P:response to antibiotic"/>
    <property type="evidence" value="ECO:0007669"/>
    <property type="project" value="UniProtKB-KW"/>
</dbReference>
<dbReference type="CDD" id="cd04187">
    <property type="entry name" value="DPM1_like_bac"/>
    <property type="match status" value="1"/>
</dbReference>
<dbReference type="FunFam" id="3.90.550.10:FF:000019">
    <property type="entry name" value="Undecaprenyl-phosphate 4-deoxy-4-formamido-L-arabinose transferase"/>
    <property type="match status" value="1"/>
</dbReference>
<dbReference type="Gene3D" id="3.90.550.10">
    <property type="entry name" value="Spore Coat Polysaccharide Biosynthesis Protein SpsA, Chain A"/>
    <property type="match status" value="1"/>
</dbReference>
<dbReference type="HAMAP" id="MF_01164">
    <property type="entry name" value="ArnC_transfer"/>
    <property type="match status" value="1"/>
</dbReference>
<dbReference type="InterPro" id="IPR022857">
    <property type="entry name" value="ArnC_tfrase"/>
</dbReference>
<dbReference type="InterPro" id="IPR001173">
    <property type="entry name" value="Glyco_trans_2-like"/>
</dbReference>
<dbReference type="InterPro" id="IPR050256">
    <property type="entry name" value="Glycosyltransferase_2"/>
</dbReference>
<dbReference type="InterPro" id="IPR029044">
    <property type="entry name" value="Nucleotide-diphossugar_trans"/>
</dbReference>
<dbReference type="NCBIfam" id="NF007986">
    <property type="entry name" value="PRK10714.1"/>
    <property type="match status" value="1"/>
</dbReference>
<dbReference type="PANTHER" id="PTHR48090:SF3">
    <property type="entry name" value="UNDECAPRENYL-PHOSPHATE 4-DEOXY-4-FORMAMIDO-L-ARABINOSE TRANSFERASE"/>
    <property type="match status" value="1"/>
</dbReference>
<dbReference type="PANTHER" id="PTHR48090">
    <property type="entry name" value="UNDECAPRENYL-PHOSPHATE 4-DEOXY-4-FORMAMIDO-L-ARABINOSE TRANSFERASE-RELATED"/>
    <property type="match status" value="1"/>
</dbReference>
<dbReference type="Pfam" id="PF00535">
    <property type="entry name" value="Glycos_transf_2"/>
    <property type="match status" value="1"/>
</dbReference>
<dbReference type="SUPFAM" id="SSF53448">
    <property type="entry name" value="Nucleotide-diphospho-sugar transferases"/>
    <property type="match status" value="1"/>
</dbReference>
<proteinExistence type="inferred from homology"/>
<gene>
    <name evidence="1" type="primary">arnC</name>
    <name type="ordered locus">ECIAI39_2401</name>
</gene>
<name>ARNC_ECO7I</name>
<evidence type="ECO:0000255" key="1">
    <source>
        <dbReference type="HAMAP-Rule" id="MF_01164"/>
    </source>
</evidence>
<feature type="chain" id="PRO_1000137909" description="Undecaprenyl-phosphate 4-deoxy-4-formamido-L-arabinose transferase">
    <location>
        <begin position="1"/>
        <end position="322"/>
    </location>
</feature>
<feature type="topological domain" description="Cytoplasmic" evidence="1">
    <location>
        <begin position="1"/>
        <end position="235"/>
    </location>
</feature>
<feature type="transmembrane region" description="Helical" evidence="1">
    <location>
        <begin position="236"/>
        <end position="256"/>
    </location>
</feature>
<feature type="topological domain" description="Periplasmic" evidence="1">
    <location>
        <begin position="257"/>
        <end position="269"/>
    </location>
</feature>
<feature type="transmembrane region" description="Helical" evidence="1">
    <location>
        <begin position="270"/>
        <end position="290"/>
    </location>
</feature>
<feature type="topological domain" description="Cytoplasmic" evidence="1">
    <location>
        <begin position="291"/>
        <end position="322"/>
    </location>
</feature>
<accession>B7NNT3</accession>
<reference key="1">
    <citation type="journal article" date="2009" name="PLoS Genet.">
        <title>Organised genome dynamics in the Escherichia coli species results in highly diverse adaptive paths.</title>
        <authorList>
            <person name="Touchon M."/>
            <person name="Hoede C."/>
            <person name="Tenaillon O."/>
            <person name="Barbe V."/>
            <person name="Baeriswyl S."/>
            <person name="Bidet P."/>
            <person name="Bingen E."/>
            <person name="Bonacorsi S."/>
            <person name="Bouchier C."/>
            <person name="Bouvet O."/>
            <person name="Calteau A."/>
            <person name="Chiapello H."/>
            <person name="Clermont O."/>
            <person name="Cruveiller S."/>
            <person name="Danchin A."/>
            <person name="Diard M."/>
            <person name="Dossat C."/>
            <person name="Karoui M.E."/>
            <person name="Frapy E."/>
            <person name="Garry L."/>
            <person name="Ghigo J.M."/>
            <person name="Gilles A.M."/>
            <person name="Johnson J."/>
            <person name="Le Bouguenec C."/>
            <person name="Lescat M."/>
            <person name="Mangenot S."/>
            <person name="Martinez-Jehanne V."/>
            <person name="Matic I."/>
            <person name="Nassif X."/>
            <person name="Oztas S."/>
            <person name="Petit M.A."/>
            <person name="Pichon C."/>
            <person name="Rouy Z."/>
            <person name="Ruf C.S."/>
            <person name="Schneider D."/>
            <person name="Tourret J."/>
            <person name="Vacherie B."/>
            <person name="Vallenet D."/>
            <person name="Medigue C."/>
            <person name="Rocha E.P.C."/>
            <person name="Denamur E."/>
        </authorList>
    </citation>
    <scope>NUCLEOTIDE SEQUENCE [LARGE SCALE GENOMIC DNA]</scope>
    <source>
        <strain>IAI39 / ExPEC</strain>
    </source>
</reference>
<organism>
    <name type="scientific">Escherichia coli O7:K1 (strain IAI39 / ExPEC)</name>
    <dbReference type="NCBI Taxonomy" id="585057"/>
    <lineage>
        <taxon>Bacteria</taxon>
        <taxon>Pseudomonadati</taxon>
        <taxon>Pseudomonadota</taxon>
        <taxon>Gammaproteobacteria</taxon>
        <taxon>Enterobacterales</taxon>
        <taxon>Enterobacteriaceae</taxon>
        <taxon>Escherichia</taxon>
    </lineage>
</organism>
<sequence>MFEIHPVKKVSVVIPVYNEQESLPELIRRTTKACESLGKEYEILLIDDGSSDNSAHMLVDASQAEGSHIVSILLNRNYGQHSAIMAGFSHVTGDLIITLDADLQNPPEEIPRLVAKADEGYDVVGTVRQNRQDSWFRKTASKMINRLIQRTTGKAMGDYGCMLRAYRRHIVDAMLHCHERSTFIPILANIFARRAIEIPVHHAEREFGESKYSFMRLINLMYDLVTCLTTTPLRMLSLLGSIIAIGGFSIAVLLVILRLTFGPQWAAEGVFMLFAVLFTFIGAQFIGMGLLGEYIGRIYTDVRARPRYFVQQVIRPSSKENE</sequence>